<organism>
    <name type="scientific">Saccharum spontaneum</name>
    <name type="common">Wild sugarcane</name>
    <dbReference type="NCBI Taxonomy" id="62335"/>
    <lineage>
        <taxon>Eukaryota</taxon>
        <taxon>Viridiplantae</taxon>
        <taxon>Streptophyta</taxon>
        <taxon>Embryophyta</taxon>
        <taxon>Tracheophyta</taxon>
        <taxon>Spermatophyta</taxon>
        <taxon>Magnoliopsida</taxon>
        <taxon>Liliopsida</taxon>
        <taxon>Poales</taxon>
        <taxon>Poaceae</taxon>
        <taxon>PACMAD clade</taxon>
        <taxon>Panicoideae</taxon>
        <taxon>Andropogonodae</taxon>
        <taxon>Andropogoneae</taxon>
        <taxon>Saccharinae</taxon>
        <taxon>Saccharum</taxon>
        <taxon>Saccharum officinarum species complex</taxon>
    </lineage>
</organism>
<geneLocation type="chloroplast"/>
<evidence type="ECO:0000255" key="1">
    <source>
        <dbReference type="HAMAP-Rule" id="MF_00433"/>
    </source>
</evidence>
<keyword id="KW-0150">Chloroplast</keyword>
<keyword id="KW-0249">Electron transport</keyword>
<keyword id="KW-0472">Membrane</keyword>
<keyword id="KW-0602">Photosynthesis</keyword>
<keyword id="KW-0934">Plastid</keyword>
<keyword id="KW-0793">Thylakoid</keyword>
<keyword id="KW-0812">Transmembrane</keyword>
<keyword id="KW-1133">Transmembrane helix</keyword>
<keyword id="KW-0813">Transport</keyword>
<comment type="function">
    <text evidence="1">Component of the cytochrome b6-f complex, which mediates electron transfer between photosystem II (PSII) and photosystem I (PSI), cyclic electron flow around PSI, and state transitions. PetL is important for photoautotrophic growth as well as for electron transfer efficiency and stability of the cytochrome b6-f complex.</text>
</comment>
<comment type="subunit">
    <text evidence="1">The 4 large subunits of the cytochrome b6-f complex are cytochrome b6, subunit IV (17 kDa polypeptide, PetD), cytochrome f and the Rieske protein, while the 4 small subunits are PetG, PetL, PetM and PetN. The complex functions as a dimer.</text>
</comment>
<comment type="subcellular location">
    <subcellularLocation>
        <location evidence="1">Plastid</location>
        <location evidence="1">Chloroplast thylakoid membrane</location>
        <topology evidence="1">Single-pass membrane protein</topology>
    </subcellularLocation>
</comment>
<comment type="similarity">
    <text evidence="1">Belongs to the PetL family.</text>
</comment>
<name>PETL_SACSP</name>
<protein>
    <recommendedName>
        <fullName evidence="1">Cytochrome b6-f complex subunit 6</fullName>
    </recommendedName>
    <alternativeName>
        <fullName evidence="1">Cytochrome b6-f complex subunit PetL</fullName>
    </alternativeName>
    <alternativeName>
        <fullName evidence="1">Cytochrome b6-f complex subunit VI</fullName>
    </alternativeName>
</protein>
<proteinExistence type="inferred from homology"/>
<sequence>MLTITSYFGFLLAALTITPALFIGLNKIRLI</sequence>
<feature type="chain" id="PRO_0000220480" description="Cytochrome b6-f complex subunit 6">
    <location>
        <begin position="1"/>
        <end position="31"/>
    </location>
</feature>
<feature type="transmembrane region" description="Helical" evidence="1">
    <location>
        <begin position="4"/>
        <end position="24"/>
    </location>
</feature>
<dbReference type="EMBL" id="AP007060">
    <property type="protein sequence ID" value="BAE02606.1"/>
    <property type="molecule type" value="Genomic_DNA"/>
</dbReference>
<dbReference type="EMBL" id="AP007061">
    <property type="protein sequence ID" value="BAE02607.1"/>
    <property type="molecule type" value="Genomic_DNA"/>
</dbReference>
<dbReference type="EMBL" id="AP007062">
    <property type="protein sequence ID" value="BAE02608.1"/>
    <property type="molecule type" value="Genomic_DNA"/>
</dbReference>
<dbReference type="RefSeq" id="YP_009370994.1">
    <property type="nucleotide sequence ID" value="NC_034802.1"/>
</dbReference>
<dbReference type="SMR" id="Q4QYS6"/>
<dbReference type="GeneID" id="32888423"/>
<dbReference type="GO" id="GO:0009535">
    <property type="term" value="C:chloroplast thylakoid membrane"/>
    <property type="evidence" value="ECO:0007669"/>
    <property type="project" value="UniProtKB-SubCell"/>
</dbReference>
<dbReference type="GO" id="GO:0009512">
    <property type="term" value="C:cytochrome b6f complex"/>
    <property type="evidence" value="ECO:0007669"/>
    <property type="project" value="InterPro"/>
</dbReference>
<dbReference type="GO" id="GO:0045158">
    <property type="term" value="F:electron transporter, transferring electrons within cytochrome b6/f complex of photosystem II activity"/>
    <property type="evidence" value="ECO:0007669"/>
    <property type="project" value="UniProtKB-UniRule"/>
</dbReference>
<dbReference type="GO" id="GO:0015979">
    <property type="term" value="P:photosynthesis"/>
    <property type="evidence" value="ECO:0007669"/>
    <property type="project" value="UniProtKB-KW"/>
</dbReference>
<dbReference type="HAMAP" id="MF_00433">
    <property type="entry name" value="Cytb6_f_PetL"/>
    <property type="match status" value="1"/>
</dbReference>
<dbReference type="InterPro" id="IPR007802">
    <property type="entry name" value="Cyt_b6/f_cplx_su6"/>
</dbReference>
<dbReference type="PANTHER" id="PTHR37266">
    <property type="entry name" value="CYTOCHROME B6-F COMPLEX SUBUNIT 6"/>
    <property type="match status" value="1"/>
</dbReference>
<dbReference type="PANTHER" id="PTHR37266:SF1">
    <property type="entry name" value="CYTOCHROME B6-F COMPLEX SUBUNIT 6"/>
    <property type="match status" value="1"/>
</dbReference>
<dbReference type="Pfam" id="PF05115">
    <property type="entry name" value="PetL"/>
    <property type="match status" value="1"/>
</dbReference>
<dbReference type="SUPFAM" id="SSF103436">
    <property type="entry name" value="PetL subunit of the cytochrome b6f complex"/>
    <property type="match status" value="1"/>
</dbReference>
<accession>Q4QYS6</accession>
<gene>
    <name evidence="1" type="primary">petL</name>
</gene>
<reference key="1">
    <citation type="journal article" date="2005" name="Theor. Appl. Genet.">
        <title>Very close relationship of the chloroplast genomes among Saccharum species.</title>
        <authorList>
            <person name="Takahashi S."/>
            <person name="Furukawa T."/>
            <person name="Asano T."/>
            <person name="Terajima Y."/>
            <person name="Shimada H."/>
            <person name="Sugimoto A."/>
            <person name="Kadowaki K."/>
        </authorList>
    </citation>
    <scope>NUCLEOTIDE SEQUENCE [GENOMIC DNA]</scope>
    <source>
        <strain>Glagah</strain>
        <strain>Jw385</strain>
        <strain>SES205A</strain>
    </source>
</reference>